<sequence>MKLRPLHDRVVIRRSEEESKTAGGIVLPGSAAEKPNRGEIVAVGTGRILENGEVRALAVKVGDKVVFGPYSGSNTVKVDGEDLLVMAENEILAVIEG</sequence>
<accession>P48226</accession>
<keyword id="KW-0143">Chaperone</keyword>
<keyword id="KW-0963">Cytoplasm</keyword>
<feature type="chain" id="PRO_0000174808" description="Co-chaperonin GroES">
    <location>
        <begin position="1"/>
        <end position="97"/>
    </location>
</feature>
<organism>
    <name type="scientific">Pseudomonas putida</name>
    <name type="common">Arthrobacter siderocapsulatus</name>
    <dbReference type="NCBI Taxonomy" id="303"/>
    <lineage>
        <taxon>Bacteria</taxon>
        <taxon>Pseudomonadati</taxon>
        <taxon>Pseudomonadota</taxon>
        <taxon>Gammaproteobacteria</taxon>
        <taxon>Pseudomonadales</taxon>
        <taxon>Pseudomonadaceae</taxon>
        <taxon>Pseudomonas</taxon>
    </lineage>
</organism>
<protein>
    <recommendedName>
        <fullName evidence="1">Co-chaperonin GroES</fullName>
    </recommendedName>
    <alternativeName>
        <fullName evidence="1">10 kDa chaperonin</fullName>
    </alternativeName>
    <alternativeName>
        <fullName evidence="1">Chaperonin-10</fullName>
        <shortName evidence="1">Cpn10</shortName>
    </alternativeName>
</protein>
<proteinExistence type="inferred from homology"/>
<name>CH10_PSEPU</name>
<dbReference type="EMBL" id="X78435">
    <property type="protein sequence ID" value="CAA55198.1"/>
    <property type="molecule type" value="Genomic_DNA"/>
</dbReference>
<dbReference type="PIR" id="S51562">
    <property type="entry name" value="S51562"/>
</dbReference>
<dbReference type="SMR" id="P48226"/>
<dbReference type="eggNOG" id="COG0234">
    <property type="taxonomic scope" value="Bacteria"/>
</dbReference>
<dbReference type="GO" id="GO:0005737">
    <property type="term" value="C:cytoplasm"/>
    <property type="evidence" value="ECO:0007669"/>
    <property type="project" value="UniProtKB-SubCell"/>
</dbReference>
<dbReference type="GO" id="GO:0005524">
    <property type="term" value="F:ATP binding"/>
    <property type="evidence" value="ECO:0007669"/>
    <property type="project" value="InterPro"/>
</dbReference>
<dbReference type="GO" id="GO:0046872">
    <property type="term" value="F:metal ion binding"/>
    <property type="evidence" value="ECO:0007669"/>
    <property type="project" value="TreeGrafter"/>
</dbReference>
<dbReference type="GO" id="GO:0044183">
    <property type="term" value="F:protein folding chaperone"/>
    <property type="evidence" value="ECO:0007669"/>
    <property type="project" value="InterPro"/>
</dbReference>
<dbReference type="GO" id="GO:0051087">
    <property type="term" value="F:protein-folding chaperone binding"/>
    <property type="evidence" value="ECO:0007669"/>
    <property type="project" value="TreeGrafter"/>
</dbReference>
<dbReference type="GO" id="GO:0051082">
    <property type="term" value="F:unfolded protein binding"/>
    <property type="evidence" value="ECO:0007669"/>
    <property type="project" value="TreeGrafter"/>
</dbReference>
<dbReference type="GO" id="GO:0051085">
    <property type="term" value="P:chaperone cofactor-dependent protein refolding"/>
    <property type="evidence" value="ECO:0007669"/>
    <property type="project" value="TreeGrafter"/>
</dbReference>
<dbReference type="CDD" id="cd00320">
    <property type="entry name" value="cpn10"/>
    <property type="match status" value="1"/>
</dbReference>
<dbReference type="FunFam" id="2.30.33.40:FF:000001">
    <property type="entry name" value="10 kDa chaperonin"/>
    <property type="match status" value="1"/>
</dbReference>
<dbReference type="Gene3D" id="2.30.33.40">
    <property type="entry name" value="GroES chaperonin"/>
    <property type="match status" value="1"/>
</dbReference>
<dbReference type="HAMAP" id="MF_00580">
    <property type="entry name" value="CH10"/>
    <property type="match status" value="1"/>
</dbReference>
<dbReference type="InterPro" id="IPR020818">
    <property type="entry name" value="Chaperonin_GroES"/>
</dbReference>
<dbReference type="InterPro" id="IPR037124">
    <property type="entry name" value="Chaperonin_GroES_sf"/>
</dbReference>
<dbReference type="InterPro" id="IPR018369">
    <property type="entry name" value="Chaprnonin_Cpn10_CS"/>
</dbReference>
<dbReference type="InterPro" id="IPR011032">
    <property type="entry name" value="GroES-like_sf"/>
</dbReference>
<dbReference type="NCBIfam" id="NF001526">
    <property type="entry name" value="PRK00364.1-1"/>
    <property type="match status" value="1"/>
</dbReference>
<dbReference type="NCBIfam" id="NF001527">
    <property type="entry name" value="PRK00364.1-2"/>
    <property type="match status" value="1"/>
</dbReference>
<dbReference type="NCBIfam" id="NF001531">
    <property type="entry name" value="PRK00364.2-2"/>
    <property type="match status" value="1"/>
</dbReference>
<dbReference type="NCBIfam" id="NF001533">
    <property type="entry name" value="PRK00364.2-4"/>
    <property type="match status" value="1"/>
</dbReference>
<dbReference type="PANTHER" id="PTHR10772">
    <property type="entry name" value="10 KDA HEAT SHOCK PROTEIN"/>
    <property type="match status" value="1"/>
</dbReference>
<dbReference type="PANTHER" id="PTHR10772:SF58">
    <property type="entry name" value="CO-CHAPERONIN GROES"/>
    <property type="match status" value="1"/>
</dbReference>
<dbReference type="Pfam" id="PF00166">
    <property type="entry name" value="Cpn10"/>
    <property type="match status" value="1"/>
</dbReference>
<dbReference type="PRINTS" id="PR00297">
    <property type="entry name" value="CHAPERONIN10"/>
</dbReference>
<dbReference type="SMART" id="SM00883">
    <property type="entry name" value="Cpn10"/>
    <property type="match status" value="1"/>
</dbReference>
<dbReference type="SUPFAM" id="SSF50129">
    <property type="entry name" value="GroES-like"/>
    <property type="match status" value="1"/>
</dbReference>
<dbReference type="PROSITE" id="PS00681">
    <property type="entry name" value="CHAPERONINS_CPN10"/>
    <property type="match status" value="1"/>
</dbReference>
<reference key="1">
    <citation type="journal article" date="1994" name="Mol. Gen. Genet.">
        <title>Amplification of the groESL operon in Pseudomonas putida increases siderophore gene promoter activity.</title>
        <authorList>
            <person name="Venturi V."/>
            <person name="Wolfs K."/>
            <person name="Leong J."/>
            <person name="Weisbeek P.J."/>
        </authorList>
    </citation>
    <scope>NUCLEOTIDE SEQUENCE [GENOMIC DNA]</scope>
    <source>
        <strain>WCS358</strain>
    </source>
</reference>
<evidence type="ECO:0000255" key="1">
    <source>
        <dbReference type="HAMAP-Rule" id="MF_00580"/>
    </source>
</evidence>
<evidence type="ECO:0000305" key="2"/>
<comment type="function">
    <text evidence="1">Together with the chaperonin GroEL, plays an essential role in assisting protein folding. The GroEL-GroES system forms a nano-cage that allows encapsulation of the non-native substrate proteins and provides a physical environment optimized to promote and accelerate protein folding. GroES binds to the apical surface of the GroEL ring, thereby capping the opening of the GroEL channel.</text>
</comment>
<comment type="subunit">
    <text evidence="1">Heptamer of 7 subunits arranged in a ring. Interacts with the chaperonin GroEL.</text>
</comment>
<comment type="subcellular location">
    <subcellularLocation>
        <location evidence="1">Cytoplasm</location>
    </subcellularLocation>
</comment>
<comment type="similarity">
    <text evidence="1 2">Belongs to the GroES chaperonin family.</text>
</comment>
<gene>
    <name evidence="1" type="primary">groES</name>
    <name evidence="1" type="synonym">groS</name>
    <name type="synonym">mopB</name>
</gene>